<organism>
    <name type="scientific">Mus musculus</name>
    <name type="common">Mouse</name>
    <dbReference type="NCBI Taxonomy" id="10090"/>
    <lineage>
        <taxon>Eukaryota</taxon>
        <taxon>Metazoa</taxon>
        <taxon>Chordata</taxon>
        <taxon>Craniata</taxon>
        <taxon>Vertebrata</taxon>
        <taxon>Euteleostomi</taxon>
        <taxon>Mammalia</taxon>
        <taxon>Eutheria</taxon>
        <taxon>Euarchontoglires</taxon>
        <taxon>Glires</taxon>
        <taxon>Rodentia</taxon>
        <taxon>Myomorpha</taxon>
        <taxon>Muroidea</taxon>
        <taxon>Muridae</taxon>
        <taxon>Murinae</taxon>
        <taxon>Mus</taxon>
        <taxon>Mus</taxon>
    </lineage>
</organism>
<name>GCC2_MOUSE</name>
<evidence type="ECO:0000250" key="1"/>
<evidence type="ECO:0000250" key="2">
    <source>
        <dbReference type="UniProtKB" id="Q8IWJ2"/>
    </source>
</evidence>
<evidence type="ECO:0000255" key="3"/>
<evidence type="ECO:0000255" key="4">
    <source>
        <dbReference type="PROSITE-ProRule" id="PRU00250"/>
    </source>
</evidence>
<evidence type="ECO:0000256" key="5">
    <source>
        <dbReference type="SAM" id="MobiDB-lite"/>
    </source>
</evidence>
<evidence type="ECO:0000305" key="6"/>
<proteinExistence type="evidence at protein level"/>
<feature type="chain" id="PRO_0000190075" description="GRIP and coiled-coil domain-containing protein 2">
    <location>
        <begin position="1"/>
        <end position="1680"/>
    </location>
</feature>
<feature type="domain" description="GRIP" evidence="4">
    <location>
        <begin position="1605"/>
        <end position="1655"/>
    </location>
</feature>
<feature type="region of interest" description="Disordered" evidence="5">
    <location>
        <begin position="1"/>
        <end position="23"/>
    </location>
</feature>
<feature type="region of interest" description="Disordered" evidence="5">
    <location>
        <begin position="1468"/>
        <end position="1522"/>
    </location>
</feature>
<feature type="region of interest" description="Mediates interaction with RAB9A" evidence="1">
    <location>
        <begin position="1570"/>
        <end position="1680"/>
    </location>
</feature>
<feature type="region of interest" description="Mediates interaction with RAB6A" evidence="1">
    <location>
        <begin position="1570"/>
        <end position="1609"/>
    </location>
</feature>
<feature type="coiled-coil region" evidence="3">
    <location>
        <begin position="31"/>
        <end position="1614"/>
    </location>
</feature>
<feature type="compositionally biased region" description="Low complexity" evidence="5">
    <location>
        <begin position="1"/>
        <end position="14"/>
    </location>
</feature>
<feature type="compositionally biased region" description="Polar residues" evidence="5">
    <location>
        <begin position="1469"/>
        <end position="1484"/>
    </location>
</feature>
<feature type="modified residue" description="N-acetylmethionine" evidence="2">
    <location>
        <position position="1"/>
    </location>
</feature>
<feature type="modified residue" description="Phosphoserine" evidence="2">
    <location>
        <position position="1475"/>
    </location>
</feature>
<feature type="modified residue" description="Phosphoserine" evidence="2">
    <location>
        <position position="1479"/>
    </location>
</feature>
<feature type="sequence conflict" description="In Ref. 3; AAH27339." evidence="6" ref="3">
    <original>I</original>
    <variation>M</variation>
    <location>
        <position position="440"/>
    </location>
</feature>
<feature type="sequence conflict" description="In Ref. 4; BAC41416." evidence="6" ref="4">
    <location>
        <position position="932"/>
    </location>
</feature>
<feature type="sequence conflict" description="In Ref. 4; BAC41416." evidence="6" ref="4">
    <original>K</original>
    <variation>E</variation>
    <location>
        <position position="1099"/>
    </location>
</feature>
<dbReference type="EMBL" id="BC027339">
    <property type="protein sequence ID" value="AAH27339.1"/>
    <property type="status" value="ALT_SEQ"/>
    <property type="molecule type" value="mRNA"/>
</dbReference>
<dbReference type="EMBL" id="BC139007">
    <property type="protein sequence ID" value="AAI39008.1"/>
    <property type="molecule type" value="mRNA"/>
</dbReference>
<dbReference type="EMBL" id="AK011206">
    <property type="protein sequence ID" value="BAB27466.3"/>
    <property type="molecule type" value="mRNA"/>
</dbReference>
<dbReference type="EMBL" id="AK045701">
    <property type="protein sequence ID" value="BAC32463.2"/>
    <property type="molecule type" value="mRNA"/>
</dbReference>
<dbReference type="EMBL" id="AB093232">
    <property type="protein sequence ID" value="BAC41416.1"/>
    <property type="molecule type" value="Transcribed_RNA"/>
</dbReference>
<dbReference type="CCDS" id="CCDS23859.1"/>
<dbReference type="RefSeq" id="NP_081651.2">
    <property type="nucleotide sequence ID" value="NM_027375.2"/>
</dbReference>
<dbReference type="SMR" id="Q8CHG3"/>
<dbReference type="FunCoup" id="Q8CHG3">
    <property type="interactions" value="2083"/>
</dbReference>
<dbReference type="IntAct" id="Q8CHG3">
    <property type="interactions" value="2"/>
</dbReference>
<dbReference type="STRING" id="10090.ENSMUSP00000054033"/>
<dbReference type="GlyGen" id="Q8CHG3">
    <property type="glycosylation" value="1 site, 1 N-linked glycan (1 site)"/>
</dbReference>
<dbReference type="iPTMnet" id="Q8CHG3"/>
<dbReference type="PhosphoSitePlus" id="Q8CHG3"/>
<dbReference type="SwissPalm" id="Q8CHG3"/>
<dbReference type="jPOST" id="Q8CHG3"/>
<dbReference type="PaxDb" id="10090-ENSMUSP00000054033"/>
<dbReference type="ProteomicsDB" id="267778"/>
<dbReference type="ProteomicsDB" id="339126"/>
<dbReference type="Pumba" id="Q8CHG3"/>
<dbReference type="Antibodypedia" id="33069">
    <property type="antibodies" value="178 antibodies from 30 providers"/>
</dbReference>
<dbReference type="DNASU" id="70297"/>
<dbReference type="Ensembl" id="ENSMUST00000057659.14">
    <property type="protein sequence ID" value="ENSMUSP00000054033.8"/>
    <property type="gene ID" value="ENSMUSG00000038039.14"/>
</dbReference>
<dbReference type="GeneID" id="70297"/>
<dbReference type="KEGG" id="mmu:70297"/>
<dbReference type="AGR" id="MGI:1917547"/>
<dbReference type="CTD" id="9648"/>
<dbReference type="MGI" id="MGI:1917547">
    <property type="gene designation" value="Gcc2"/>
</dbReference>
<dbReference type="VEuPathDB" id="HostDB:ENSMUSG00000038039"/>
<dbReference type="eggNOG" id="KOG0864">
    <property type="taxonomic scope" value="Eukaryota"/>
</dbReference>
<dbReference type="GeneTree" id="ENSGT00950000183078"/>
<dbReference type="HOGENOM" id="CLU_002922_0_0_1"/>
<dbReference type="InParanoid" id="Q8CHG3"/>
<dbReference type="OMA" id="TEANHFE"/>
<dbReference type="OrthoDB" id="1926336at2759"/>
<dbReference type="TreeFam" id="TF332907"/>
<dbReference type="Reactome" id="R-MMU-6811440">
    <property type="pathway name" value="Retrograde transport at the Trans-Golgi-Network"/>
</dbReference>
<dbReference type="BioGRID-ORCS" id="70297">
    <property type="hits" value="1 hit in 76 CRISPR screens"/>
</dbReference>
<dbReference type="ChiTaRS" id="Gcc2">
    <property type="organism name" value="mouse"/>
</dbReference>
<dbReference type="PRO" id="PR:Q8CHG3"/>
<dbReference type="Proteomes" id="UP000000589">
    <property type="component" value="Chromosome 10"/>
</dbReference>
<dbReference type="RNAct" id="Q8CHG3">
    <property type="molecule type" value="protein"/>
</dbReference>
<dbReference type="Bgee" id="ENSMUSG00000038039">
    <property type="expression patterns" value="Expressed in embryonic post-anal tail and 65 other cell types or tissues"/>
</dbReference>
<dbReference type="GO" id="GO:0005829">
    <property type="term" value="C:cytosol"/>
    <property type="evidence" value="ECO:0007669"/>
    <property type="project" value="GOC"/>
</dbReference>
<dbReference type="GO" id="GO:0016020">
    <property type="term" value="C:membrane"/>
    <property type="evidence" value="ECO:0007669"/>
    <property type="project" value="UniProtKB-KW"/>
</dbReference>
<dbReference type="GO" id="GO:0005654">
    <property type="term" value="C:nucleoplasm"/>
    <property type="evidence" value="ECO:0007669"/>
    <property type="project" value="Ensembl"/>
</dbReference>
<dbReference type="GO" id="GO:0005802">
    <property type="term" value="C:trans-Golgi network"/>
    <property type="evidence" value="ECO:0000250"/>
    <property type="project" value="UniProtKB"/>
</dbReference>
<dbReference type="GO" id="GO:0042802">
    <property type="term" value="F:identical protein binding"/>
    <property type="evidence" value="ECO:0007669"/>
    <property type="project" value="Ensembl"/>
</dbReference>
<dbReference type="GO" id="GO:0090161">
    <property type="term" value="P:Golgi ribbon formation"/>
    <property type="evidence" value="ECO:0000250"/>
    <property type="project" value="UniProtKB"/>
</dbReference>
<dbReference type="GO" id="GO:0034499">
    <property type="term" value="P:late endosome to Golgi transport"/>
    <property type="evidence" value="ECO:0000250"/>
    <property type="project" value="UniProtKB"/>
</dbReference>
<dbReference type="GO" id="GO:0034453">
    <property type="term" value="P:microtubule anchoring"/>
    <property type="evidence" value="ECO:0000250"/>
    <property type="project" value="UniProtKB"/>
</dbReference>
<dbReference type="GO" id="GO:0031023">
    <property type="term" value="P:microtubule organizing center organization"/>
    <property type="evidence" value="ECO:0000250"/>
    <property type="project" value="UniProtKB"/>
</dbReference>
<dbReference type="GO" id="GO:0034067">
    <property type="term" value="P:protein localization to Golgi apparatus"/>
    <property type="evidence" value="ECO:0000250"/>
    <property type="project" value="UniProtKB"/>
</dbReference>
<dbReference type="GO" id="GO:0006622">
    <property type="term" value="P:protein targeting to lysosome"/>
    <property type="evidence" value="ECO:0000250"/>
    <property type="project" value="UniProtKB"/>
</dbReference>
<dbReference type="GO" id="GO:0071955">
    <property type="term" value="P:recycling endosome to Golgi transport"/>
    <property type="evidence" value="ECO:0000250"/>
    <property type="project" value="UniProtKB"/>
</dbReference>
<dbReference type="GO" id="GO:0070861">
    <property type="term" value="P:regulation of protein exit from endoplasmic reticulum"/>
    <property type="evidence" value="ECO:0000250"/>
    <property type="project" value="UniProtKB"/>
</dbReference>
<dbReference type="FunFam" id="1.10.220.60:FF:000003">
    <property type="entry name" value="GRIP and coiled-coil domain-containing protein 2"/>
    <property type="match status" value="1"/>
</dbReference>
<dbReference type="Gene3D" id="1.10.220.60">
    <property type="entry name" value="GRIP domain"/>
    <property type="match status" value="1"/>
</dbReference>
<dbReference type="InterPro" id="IPR032023">
    <property type="entry name" value="GCC2_Rab_bind"/>
</dbReference>
<dbReference type="InterPro" id="IPR000237">
    <property type="entry name" value="GRIP_dom"/>
</dbReference>
<dbReference type="InterPro" id="IPR051841">
    <property type="entry name" value="MT-Golgi_org_protein"/>
</dbReference>
<dbReference type="PANTHER" id="PTHR18902:SF25">
    <property type="entry name" value="GRIP AND COILED-COIL DOMAIN-CONTAINING PROTEIN 2"/>
    <property type="match status" value="1"/>
</dbReference>
<dbReference type="PANTHER" id="PTHR18902">
    <property type="entry name" value="NUCLEAR MITOTIC APPARATUS PROTEIN 1-RELATED"/>
    <property type="match status" value="1"/>
</dbReference>
<dbReference type="Pfam" id="PF01465">
    <property type="entry name" value="GRIP"/>
    <property type="match status" value="1"/>
</dbReference>
<dbReference type="Pfam" id="PF16704">
    <property type="entry name" value="Rab_bind"/>
    <property type="match status" value="1"/>
</dbReference>
<dbReference type="SMART" id="SM00755">
    <property type="entry name" value="Grip"/>
    <property type="match status" value="1"/>
</dbReference>
<dbReference type="PROSITE" id="PS50913">
    <property type="entry name" value="GRIP"/>
    <property type="match status" value="1"/>
</dbReference>
<gene>
    <name type="primary">Gcc2</name>
    <name type="synonym">Kiaa0336</name>
</gene>
<protein>
    <recommendedName>
        <fullName>GRIP and coiled-coil domain-containing protein 2</fullName>
    </recommendedName>
    <alternativeName>
        <fullName>185 kDa Golgi coiled-coil protein</fullName>
        <shortName>GCC185</shortName>
    </alternativeName>
</protein>
<comment type="function">
    <text evidence="1">Golgin which probably tethers transport vesicles to the trans-Golgi network (TGN) and regulates vesicular transport between the endosomes and the Golgi. As a RAB9A effector it is involved in recycling of the mannose 6-phosphate receptor from the late endosomes to the TGN. May also play a role in transport between the recycling endosomes and the Golgi. Required for maintenance of the Golgi structure, it is involved in the biogenesis of noncentrosomal, Golgi-associated microtubules through recruitment of CLASP1 and CLASP2 (By similarity).</text>
</comment>
<comment type="subunit">
    <text evidence="1">Homodimer. Interacts (via GRIP domain) with RAB6A (preferentially in its GTP-bound form). May interact (RAB6A-dependent) with ARL1; might be involved in GCC2 Golgi localization. Interacts (probably via GRIP domain) with RAB9A (preferentially in its GTP-bound form). Interacts with CLASP1 and CLASP2; recruits both proteins to membranes of the TGN. Interacts with STX16 (By similarity).</text>
</comment>
<comment type="interaction">
    <interactant intactId="EBI-643470">
        <id>Q8CHG3</id>
    </interactant>
    <interactant intactId="EBI-643162">
        <id>Q8BH43</id>
        <label>Wasf2</label>
    </interactant>
    <organismsDiffer>false</organismsDiffer>
    <experiments>6</experiments>
</comment>
<comment type="subcellular location">
    <subcellularLocation>
        <location evidence="1">Cytoplasm</location>
    </subcellularLocation>
    <subcellularLocation>
        <location evidence="1">Golgi apparatus</location>
        <location evidence="1">trans-Golgi network membrane</location>
        <topology evidence="1">Peripheral membrane protein</topology>
    </subcellularLocation>
</comment>
<comment type="domain">
    <text>Extended rod-like protein with coiled-coil domains.</text>
</comment>
<comment type="sequence caution" evidence="6">
    <conflict type="erroneous initiation">
        <sequence resource="EMBL-CDS" id="AAH27339"/>
    </conflict>
    <text>Truncated N-terminus.</text>
</comment>
<comment type="sequence caution" evidence="6">
    <conflict type="miscellaneous discrepancy">
        <sequence resource="EMBL-CDS" id="AAH27339"/>
    </conflict>
    <text>Probable cloning artifact. Incorrect C-terminus.</text>
</comment>
<reference key="1">
    <citation type="journal article" date="2009" name="PLoS Biol.">
        <title>Lineage-specific biology revealed by a finished genome assembly of the mouse.</title>
        <authorList>
            <person name="Church D.M."/>
            <person name="Goodstadt L."/>
            <person name="Hillier L.W."/>
            <person name="Zody M.C."/>
            <person name="Goldstein S."/>
            <person name="She X."/>
            <person name="Bult C.J."/>
            <person name="Agarwala R."/>
            <person name="Cherry J.L."/>
            <person name="DiCuccio M."/>
            <person name="Hlavina W."/>
            <person name="Kapustin Y."/>
            <person name="Meric P."/>
            <person name="Maglott D."/>
            <person name="Birtle Z."/>
            <person name="Marques A.C."/>
            <person name="Graves T."/>
            <person name="Zhou S."/>
            <person name="Teague B."/>
            <person name="Potamousis K."/>
            <person name="Churas C."/>
            <person name="Place M."/>
            <person name="Herschleb J."/>
            <person name="Runnheim R."/>
            <person name="Forrest D."/>
            <person name="Amos-Landgraf J."/>
            <person name="Schwartz D.C."/>
            <person name="Cheng Z."/>
            <person name="Lindblad-Toh K."/>
            <person name="Eichler E.E."/>
            <person name="Ponting C.P."/>
        </authorList>
    </citation>
    <scope>NUCLEOTIDE SEQUENCE [LARGE SCALE GENOMIC DNA]</scope>
    <source>
        <strain>C57BL/6J</strain>
    </source>
</reference>
<reference key="2">
    <citation type="journal article" date="2004" name="Genome Res.">
        <title>The status, quality, and expansion of the NIH full-length cDNA project: the Mammalian Gene Collection (MGC).</title>
        <authorList>
            <consortium name="The MGC Project Team"/>
        </authorList>
    </citation>
    <scope>NUCLEOTIDE SEQUENCE [LARGE SCALE MRNA]</scope>
    <source>
        <tissue>Mammary gland</tissue>
    </source>
</reference>
<reference key="3">
    <citation type="journal article" date="2005" name="Science">
        <title>The transcriptional landscape of the mammalian genome.</title>
        <authorList>
            <person name="Carninci P."/>
            <person name="Kasukawa T."/>
            <person name="Katayama S."/>
            <person name="Gough J."/>
            <person name="Frith M.C."/>
            <person name="Maeda N."/>
            <person name="Oyama R."/>
            <person name="Ravasi T."/>
            <person name="Lenhard B."/>
            <person name="Wells C."/>
            <person name="Kodzius R."/>
            <person name="Shimokawa K."/>
            <person name="Bajic V.B."/>
            <person name="Brenner S.E."/>
            <person name="Batalov S."/>
            <person name="Forrest A.R."/>
            <person name="Zavolan M."/>
            <person name="Davis M.J."/>
            <person name="Wilming L.G."/>
            <person name="Aidinis V."/>
            <person name="Allen J.E."/>
            <person name="Ambesi-Impiombato A."/>
            <person name="Apweiler R."/>
            <person name="Aturaliya R.N."/>
            <person name="Bailey T.L."/>
            <person name="Bansal M."/>
            <person name="Baxter L."/>
            <person name="Beisel K.W."/>
            <person name="Bersano T."/>
            <person name="Bono H."/>
            <person name="Chalk A.M."/>
            <person name="Chiu K.P."/>
            <person name="Choudhary V."/>
            <person name="Christoffels A."/>
            <person name="Clutterbuck D.R."/>
            <person name="Crowe M.L."/>
            <person name="Dalla E."/>
            <person name="Dalrymple B.P."/>
            <person name="de Bono B."/>
            <person name="Della Gatta G."/>
            <person name="di Bernardo D."/>
            <person name="Down T."/>
            <person name="Engstrom P."/>
            <person name="Fagiolini M."/>
            <person name="Faulkner G."/>
            <person name="Fletcher C.F."/>
            <person name="Fukushima T."/>
            <person name="Furuno M."/>
            <person name="Futaki S."/>
            <person name="Gariboldi M."/>
            <person name="Georgii-Hemming P."/>
            <person name="Gingeras T.R."/>
            <person name="Gojobori T."/>
            <person name="Green R.E."/>
            <person name="Gustincich S."/>
            <person name="Harbers M."/>
            <person name="Hayashi Y."/>
            <person name="Hensch T.K."/>
            <person name="Hirokawa N."/>
            <person name="Hill D."/>
            <person name="Huminiecki L."/>
            <person name="Iacono M."/>
            <person name="Ikeo K."/>
            <person name="Iwama A."/>
            <person name="Ishikawa T."/>
            <person name="Jakt M."/>
            <person name="Kanapin A."/>
            <person name="Katoh M."/>
            <person name="Kawasawa Y."/>
            <person name="Kelso J."/>
            <person name="Kitamura H."/>
            <person name="Kitano H."/>
            <person name="Kollias G."/>
            <person name="Krishnan S.P."/>
            <person name="Kruger A."/>
            <person name="Kummerfeld S.K."/>
            <person name="Kurochkin I.V."/>
            <person name="Lareau L.F."/>
            <person name="Lazarevic D."/>
            <person name="Lipovich L."/>
            <person name="Liu J."/>
            <person name="Liuni S."/>
            <person name="McWilliam S."/>
            <person name="Madan Babu M."/>
            <person name="Madera M."/>
            <person name="Marchionni L."/>
            <person name="Matsuda H."/>
            <person name="Matsuzawa S."/>
            <person name="Miki H."/>
            <person name="Mignone F."/>
            <person name="Miyake S."/>
            <person name="Morris K."/>
            <person name="Mottagui-Tabar S."/>
            <person name="Mulder N."/>
            <person name="Nakano N."/>
            <person name="Nakauchi H."/>
            <person name="Ng P."/>
            <person name="Nilsson R."/>
            <person name="Nishiguchi S."/>
            <person name="Nishikawa S."/>
            <person name="Nori F."/>
            <person name="Ohara O."/>
            <person name="Okazaki Y."/>
            <person name="Orlando V."/>
            <person name="Pang K.C."/>
            <person name="Pavan W.J."/>
            <person name="Pavesi G."/>
            <person name="Pesole G."/>
            <person name="Petrovsky N."/>
            <person name="Piazza S."/>
            <person name="Reed J."/>
            <person name="Reid J.F."/>
            <person name="Ring B.Z."/>
            <person name="Ringwald M."/>
            <person name="Rost B."/>
            <person name="Ruan Y."/>
            <person name="Salzberg S.L."/>
            <person name="Sandelin A."/>
            <person name="Schneider C."/>
            <person name="Schoenbach C."/>
            <person name="Sekiguchi K."/>
            <person name="Semple C.A."/>
            <person name="Seno S."/>
            <person name="Sessa L."/>
            <person name="Sheng Y."/>
            <person name="Shibata Y."/>
            <person name="Shimada H."/>
            <person name="Shimada K."/>
            <person name="Silva D."/>
            <person name="Sinclair B."/>
            <person name="Sperling S."/>
            <person name="Stupka E."/>
            <person name="Sugiura K."/>
            <person name="Sultana R."/>
            <person name="Takenaka Y."/>
            <person name="Taki K."/>
            <person name="Tammoja K."/>
            <person name="Tan S.L."/>
            <person name="Tang S."/>
            <person name="Taylor M.S."/>
            <person name="Tegner J."/>
            <person name="Teichmann S.A."/>
            <person name="Ueda H.R."/>
            <person name="van Nimwegen E."/>
            <person name="Verardo R."/>
            <person name="Wei C.L."/>
            <person name="Yagi K."/>
            <person name="Yamanishi H."/>
            <person name="Zabarovsky E."/>
            <person name="Zhu S."/>
            <person name="Zimmer A."/>
            <person name="Hide W."/>
            <person name="Bult C."/>
            <person name="Grimmond S.M."/>
            <person name="Teasdale R.D."/>
            <person name="Liu E.T."/>
            <person name="Brusic V."/>
            <person name="Quackenbush J."/>
            <person name="Wahlestedt C."/>
            <person name="Mattick J.S."/>
            <person name="Hume D.A."/>
            <person name="Kai C."/>
            <person name="Sasaki D."/>
            <person name="Tomaru Y."/>
            <person name="Fukuda S."/>
            <person name="Kanamori-Katayama M."/>
            <person name="Suzuki M."/>
            <person name="Aoki J."/>
            <person name="Arakawa T."/>
            <person name="Iida J."/>
            <person name="Imamura K."/>
            <person name="Itoh M."/>
            <person name="Kato T."/>
            <person name="Kawaji H."/>
            <person name="Kawagashira N."/>
            <person name="Kawashima T."/>
            <person name="Kojima M."/>
            <person name="Kondo S."/>
            <person name="Konno H."/>
            <person name="Nakano K."/>
            <person name="Ninomiya N."/>
            <person name="Nishio T."/>
            <person name="Okada M."/>
            <person name="Plessy C."/>
            <person name="Shibata K."/>
            <person name="Shiraki T."/>
            <person name="Suzuki S."/>
            <person name="Tagami M."/>
            <person name="Waki K."/>
            <person name="Watahiki A."/>
            <person name="Okamura-Oho Y."/>
            <person name="Suzuki H."/>
            <person name="Kawai J."/>
            <person name="Hayashizaki Y."/>
        </authorList>
    </citation>
    <scope>NUCLEOTIDE SEQUENCE [LARGE SCALE MRNA] OF 1-443</scope>
    <source>
        <strain>C57BL/6J</strain>
        <tissue>Brain</tissue>
        <tissue>Embryo</tissue>
    </source>
</reference>
<reference key="4">
    <citation type="journal article" date="2003" name="DNA Res.">
        <title>Prediction of the coding sequences of mouse homologues of KIAA gene: II. The complete nucleotide sequences of 400 mouse KIAA-homologous cDNAs identified by screening of terminal sequences of cDNA clones randomly sampled from size-fractionated libraries.</title>
        <authorList>
            <person name="Okazaki N."/>
            <person name="Kikuno R."/>
            <person name="Ohara R."/>
            <person name="Inamoto S."/>
            <person name="Aizawa H."/>
            <person name="Yuasa S."/>
            <person name="Nakajima D."/>
            <person name="Nagase T."/>
            <person name="Ohara O."/>
            <person name="Koga H."/>
        </authorList>
    </citation>
    <scope>NUCLEOTIDE SEQUENCE [LARGE SCALE MRNA] OF 49-1680</scope>
    <source>
        <tissue>Brain</tissue>
    </source>
</reference>
<reference key="5">
    <citation type="submission" date="2009-01" db="UniProtKB">
        <authorList>
            <person name="Lubec G."/>
            <person name="Sunyer B."/>
            <person name="Chen W.-Q."/>
        </authorList>
    </citation>
    <scope>PROTEIN SEQUENCE OF 971-978</scope>
    <scope>IDENTIFICATION BY MASS SPECTROMETRY</scope>
    <source>
        <strain>OF1</strain>
        <tissue>Hippocampus</tissue>
    </source>
</reference>
<reference key="6">
    <citation type="journal article" date="2010" name="Cell">
        <title>A tissue-specific atlas of mouse protein phosphorylation and expression.</title>
        <authorList>
            <person name="Huttlin E.L."/>
            <person name="Jedrychowski M.P."/>
            <person name="Elias J.E."/>
            <person name="Goswami T."/>
            <person name="Rad R."/>
            <person name="Beausoleil S.A."/>
            <person name="Villen J."/>
            <person name="Haas W."/>
            <person name="Sowa M.E."/>
            <person name="Gygi S.P."/>
        </authorList>
    </citation>
    <scope>IDENTIFICATION BY MASS SPECTROMETRY [LARGE SCALE ANALYSIS]</scope>
    <source>
        <tissue>Brain</tissue>
        <tissue>Brown adipose tissue</tissue>
        <tissue>Heart</tissue>
        <tissue>Kidney</tissue>
        <tissue>Liver</tissue>
        <tissue>Lung</tissue>
        <tissue>Pancreas</tissue>
        <tissue>Spleen</tissue>
        <tissue>Testis</tissue>
    </source>
</reference>
<accession>Q8CHG3</accession>
<accession>B2RSU7</accession>
<accession>Q8BR44</accession>
<accession>Q8R2Q5</accession>
<accession>Q9CT45</accession>
<keyword id="KW-0007">Acetylation</keyword>
<keyword id="KW-0175">Coiled coil</keyword>
<keyword id="KW-0963">Cytoplasm</keyword>
<keyword id="KW-0903">Direct protein sequencing</keyword>
<keyword id="KW-0333">Golgi apparatus</keyword>
<keyword id="KW-0472">Membrane</keyword>
<keyword id="KW-0597">Phosphoprotein</keyword>
<keyword id="KW-0653">Protein transport</keyword>
<keyword id="KW-1185">Reference proteome</keyword>
<keyword id="KW-0813">Transport</keyword>
<sequence>MEDSAPDAVAAAPSGTPKSKLETLPREDLIKFAKKQMMLLQKAKARCTELDKEVEELKSKPVDGGTDDIIKVLTERLDALLLEKAETEQQCLCLKKENVKMKQEVEDSVTKLEETHKEFEQSHRNYVKEIESCKNELMAVHSEHSKETAILQKELEEAVHKQVELREQLKSQSDSEDNVRKLQEEIQNITAAFEEQISCLEKKLEATSDEKQQEIIHLQKVIEDKAQHYQKDINTFQAEILQLRATHKEEVTELMSQIETSAKEHEAEINKLKENRVTQCEASENIPEKYQCESENLNEVASDASPESQNCSVALQEDPSAEQTVCDKVRQLEDSLKELESQHSILKDEVTYMNNLKLKLEMDAQHIKDEFFHEREDLEFKINELLLAKEEQGYVVEKLKYEREDLNRQLCCAVEQHNKEIQRLQEHHQKEVSELSETFISGSEKEKLALMFEIQGLKEQCENLQHEKQEVVLNYESLREMMEILQTELGESAGKISQEFETMKQQQASDVHELQQKLRSAFNEKDALLETVNRLQGENEKLLSQQELVPELESTIKNLQADNSMYLASLGQKDTMLQELEAKISSLAKEKDDFISKIKTSHEEMDDLHQKWEREQRLSVELREAAGQAAQHNSELRQRVSELTGKLDELVREKSQNDQSITVQMKTMTEDQEALSSKIKSLYEENNRLHSEKAQLSRDLEALQAQQDFAHKEHVAEFEKKLQLMVEERDDLNKLLENEQVQKSFVKTQLYEYLKQLRASILEENEEEDVVKLIQAVGESLVKVKEEEHNLVFEYDARVLELENKIKCLQEDSAVQCEELRTLVRDSEQEKILLRKELDAVTSAKEALQLDLLEMKNTNEKASLENQTLSTQVEELSQTLHSRNEVHDEKVLVIEHENLRLLLKQRESELQDVRAELILLKDSLEKSPSVKNDQLSLVKELEEKIESLEKESKDKDEKISKIKLVAVKAKKELDSNRKEAQTLREELESVRSEKDRLSASMKEFLQGAESYKSLLLEYDKQSEQLDVEKERAHNFERHIEDLTKQLRNSTCQYERLTSDNEDLLARIETLQANAKLLEAQILEVQKAKGVVEKELDAEKLQKEQKIKEHVSTVNELEELQLQFQKEKKQLQKTMQELELVKKDAQQTTLMNMEIADYERLMKELNQKLTNKNSTIEDLEQEMKIQKEKQETLQEEITSLQSSVQHYEEKNTKIKQLLVKTKKELADAKQAETDHLLLQASLKGELEASQQQVEVYKIQLAEMTSEKHKIHEHLKTSAEQHQRTLSAYQQRVVALQEESRAAKAEQAAVTSEFESYKVRVHNVLKQQKNKSVSQVETEGAKQEREHLEMLIDQLKIKLQDSQNSLQISVSEYQTLQAEHDTLLERHNRMLQETVTKEAELREKLCSVQSENTMMKSEHSQTMCQLTSQNEALRTSFRDQVRHLQDEHRKTVETLQHQLSKLEAQLFQLKSEPSTRSPASSHQPSKSLRERRTTDLPLLDMHTVAREEGEGMETTDSESVSSAGTHIQSLEQLLSSPDTKLERLAETSLWHNEFTKEELAEKLSSTTKSADHLNGLLRETEATNAILMEQIKLLKSEIRRLERNQEREKSVANLEYLKNVLLRFIFLKPGSERERLLPVIDTMLQLSPEEKGKLATVAQGEEESASRSSGWASYLHSWSGLR</sequence>